<name>RS9_VIBC1</name>
<accession>A7MWN0</accession>
<gene>
    <name evidence="1" type="primary">rpsI</name>
    <name type="ordered locus">VIBHAR_00882</name>
</gene>
<keyword id="KW-0687">Ribonucleoprotein</keyword>
<keyword id="KW-0689">Ribosomal protein</keyword>
<organism>
    <name type="scientific">Vibrio campbellii (strain ATCC BAA-1116)</name>
    <dbReference type="NCBI Taxonomy" id="2902295"/>
    <lineage>
        <taxon>Bacteria</taxon>
        <taxon>Pseudomonadati</taxon>
        <taxon>Pseudomonadota</taxon>
        <taxon>Gammaproteobacteria</taxon>
        <taxon>Vibrionales</taxon>
        <taxon>Vibrionaceae</taxon>
        <taxon>Vibrio</taxon>
    </lineage>
</organism>
<proteinExistence type="inferred from homology"/>
<protein>
    <recommendedName>
        <fullName evidence="1">Small ribosomal subunit protein uS9</fullName>
    </recommendedName>
    <alternativeName>
        <fullName evidence="2">30S ribosomal protein S9</fullName>
    </alternativeName>
</protein>
<feature type="chain" id="PRO_1000051363" description="Small ribosomal subunit protein uS9">
    <location>
        <begin position="1"/>
        <end position="130"/>
    </location>
</feature>
<sequence>MAENQYYGTGRRKSSAARVFIKPGSGNIVINKRSLDEYFGRPTSRMVVKQPLELVELTEKLDLYVTVKGGGISGQAGAIRHGITRALMEYDESLRPTLRAAGYVTRDARCVERKKVGLRKARRRPQFSKR</sequence>
<reference key="1">
    <citation type="submission" date="2007-08" db="EMBL/GenBank/DDBJ databases">
        <authorList>
            <consortium name="The Vibrio harveyi Genome Sequencing Project"/>
            <person name="Bassler B."/>
            <person name="Clifton S.W."/>
            <person name="Fulton L."/>
            <person name="Delehaunty K."/>
            <person name="Fronick C."/>
            <person name="Harrison M."/>
            <person name="Markivic C."/>
            <person name="Fulton R."/>
            <person name="Tin-Wollam A.-M."/>
            <person name="Shah N."/>
            <person name="Pepin K."/>
            <person name="Nash W."/>
            <person name="Thiruvilangam P."/>
            <person name="Bhonagiri V."/>
            <person name="Waters C."/>
            <person name="Tu K.C."/>
            <person name="Irgon J."/>
            <person name="Wilson R.K."/>
        </authorList>
    </citation>
    <scope>NUCLEOTIDE SEQUENCE [LARGE SCALE GENOMIC DNA]</scope>
    <source>
        <strain>ATCC BAA-1116 / BB120</strain>
    </source>
</reference>
<dbReference type="EMBL" id="CP000789">
    <property type="protein sequence ID" value="ABU69882.1"/>
    <property type="molecule type" value="Genomic_DNA"/>
</dbReference>
<dbReference type="RefSeq" id="WP_005436094.1">
    <property type="nucleotide sequence ID" value="NC_022269.1"/>
</dbReference>
<dbReference type="SMR" id="A7MWN0"/>
<dbReference type="GeneID" id="93941048"/>
<dbReference type="KEGG" id="vha:VIBHAR_00882"/>
<dbReference type="PATRIC" id="fig|338187.25.peg.1735"/>
<dbReference type="Proteomes" id="UP000008152">
    <property type="component" value="Chromosome I"/>
</dbReference>
<dbReference type="GO" id="GO:0022627">
    <property type="term" value="C:cytosolic small ribosomal subunit"/>
    <property type="evidence" value="ECO:0007669"/>
    <property type="project" value="TreeGrafter"/>
</dbReference>
<dbReference type="GO" id="GO:0003723">
    <property type="term" value="F:RNA binding"/>
    <property type="evidence" value="ECO:0007669"/>
    <property type="project" value="TreeGrafter"/>
</dbReference>
<dbReference type="GO" id="GO:0003735">
    <property type="term" value="F:structural constituent of ribosome"/>
    <property type="evidence" value="ECO:0007669"/>
    <property type="project" value="InterPro"/>
</dbReference>
<dbReference type="GO" id="GO:0006412">
    <property type="term" value="P:translation"/>
    <property type="evidence" value="ECO:0007669"/>
    <property type="project" value="UniProtKB-UniRule"/>
</dbReference>
<dbReference type="FunFam" id="3.30.230.10:FF:000001">
    <property type="entry name" value="30S ribosomal protein S9"/>
    <property type="match status" value="1"/>
</dbReference>
<dbReference type="Gene3D" id="3.30.230.10">
    <property type="match status" value="1"/>
</dbReference>
<dbReference type="HAMAP" id="MF_00532_B">
    <property type="entry name" value="Ribosomal_uS9_B"/>
    <property type="match status" value="1"/>
</dbReference>
<dbReference type="InterPro" id="IPR020568">
    <property type="entry name" value="Ribosomal_Su5_D2-typ_SF"/>
</dbReference>
<dbReference type="InterPro" id="IPR000754">
    <property type="entry name" value="Ribosomal_uS9"/>
</dbReference>
<dbReference type="InterPro" id="IPR023035">
    <property type="entry name" value="Ribosomal_uS9_bac/plastid"/>
</dbReference>
<dbReference type="InterPro" id="IPR020574">
    <property type="entry name" value="Ribosomal_uS9_CS"/>
</dbReference>
<dbReference type="InterPro" id="IPR014721">
    <property type="entry name" value="Ribsml_uS5_D2-typ_fold_subgr"/>
</dbReference>
<dbReference type="NCBIfam" id="NF001099">
    <property type="entry name" value="PRK00132.1"/>
    <property type="match status" value="1"/>
</dbReference>
<dbReference type="PANTHER" id="PTHR21569">
    <property type="entry name" value="RIBOSOMAL PROTEIN S9"/>
    <property type="match status" value="1"/>
</dbReference>
<dbReference type="PANTHER" id="PTHR21569:SF1">
    <property type="entry name" value="SMALL RIBOSOMAL SUBUNIT PROTEIN US9M"/>
    <property type="match status" value="1"/>
</dbReference>
<dbReference type="Pfam" id="PF00380">
    <property type="entry name" value="Ribosomal_S9"/>
    <property type="match status" value="1"/>
</dbReference>
<dbReference type="SUPFAM" id="SSF54211">
    <property type="entry name" value="Ribosomal protein S5 domain 2-like"/>
    <property type="match status" value="1"/>
</dbReference>
<dbReference type="PROSITE" id="PS00360">
    <property type="entry name" value="RIBOSOMAL_S9"/>
    <property type="match status" value="1"/>
</dbReference>
<comment type="similarity">
    <text evidence="1">Belongs to the universal ribosomal protein uS9 family.</text>
</comment>
<evidence type="ECO:0000255" key="1">
    <source>
        <dbReference type="HAMAP-Rule" id="MF_00532"/>
    </source>
</evidence>
<evidence type="ECO:0000305" key="2"/>